<proteinExistence type="evidence at protein level"/>
<protein>
    <recommendedName>
        <fullName>Sterol carrier protein 2</fullName>
        <shortName>SCP-2</shortName>
    </recommendedName>
    <alternativeName>
        <fullName>Acetyl-CoA C-myristoyltransferase</fullName>
        <ecNumber evidence="2">2.3.1.155</ecNumber>
    </alternativeName>
    <alternativeName>
        <fullName evidence="19">Non-specific lipid-transfer protein</fullName>
        <shortName>NSL-TP</shortName>
    </alternativeName>
    <alternativeName>
        <fullName>Propanoyl-CoA C-acyltransferase</fullName>
        <ecNumber evidence="20">2.3.1.176</ecNumber>
    </alternativeName>
    <alternativeName>
        <fullName>SCP-2/3-oxoacyl-CoA thiolase</fullName>
    </alternativeName>
    <alternativeName>
        <fullName>SCP-2/thiolase</fullName>
        <ecNumber evidence="2">2.3.1.16</ecNumber>
    </alternativeName>
    <alternativeName>
        <fullName>SCP-chi</fullName>
    </alternativeName>
    <alternativeName>
        <fullName>SCPX</fullName>
    </alternativeName>
    <alternativeName>
        <fullName>Sterol carrier protein X</fullName>
        <shortName>SCP-X</shortName>
    </alternativeName>
</protein>
<gene>
    <name evidence="22" type="primary">SCP2</name>
</gene>
<feature type="chain" id="PRO_0000034091" description="Sterol carrier protein 2">
    <location>
        <begin position="1"/>
        <end position="547"/>
    </location>
</feature>
<feature type="domain" description="SCP2">
    <location>
        <begin position="433"/>
        <end position="543"/>
    </location>
</feature>
<feature type="short sequence motif" description="Microbody targeting signal" evidence="4">
    <location>
        <begin position="545"/>
        <end position="547"/>
    </location>
</feature>
<feature type="modified residue" description="Phosphoserine" evidence="2">
    <location>
        <position position="3"/>
    </location>
</feature>
<feature type="modified residue" description="N6-acetyllysine; alternate" evidence="3">
    <location>
        <position position="132"/>
    </location>
</feature>
<feature type="modified residue" description="N6-succinyllysine; alternate" evidence="3">
    <location>
        <position position="132"/>
    </location>
</feature>
<feature type="modified residue" description="N6-succinyllysine" evidence="3">
    <location>
        <position position="168"/>
    </location>
</feature>
<feature type="modified residue" description="N6-acetyllysine" evidence="3">
    <location>
        <position position="173"/>
    </location>
</feature>
<feature type="modified residue" description="N6-acetyllysine" evidence="3">
    <location>
        <position position="177"/>
    </location>
</feature>
<feature type="modified residue" description="N6-acetyllysine; alternate" evidence="23">
    <location>
        <position position="183"/>
    </location>
</feature>
<feature type="modified residue" description="N6-succinyllysine; alternate" evidence="3">
    <location>
        <position position="183"/>
    </location>
</feature>
<feature type="modified residue" description="N6-succinyllysine" evidence="3">
    <location>
        <position position="282"/>
    </location>
</feature>
<feature type="modified residue" description="N6-acetyllysine; alternate" evidence="3">
    <location>
        <position position="341"/>
    </location>
</feature>
<feature type="modified residue" description="N6-succinyllysine; alternate" evidence="3">
    <location>
        <position position="341"/>
    </location>
</feature>
<feature type="modified residue" description="N6-acetyllysine; alternate" evidence="3">
    <location>
        <position position="432"/>
    </location>
</feature>
<feature type="modified residue" description="N6-succinyllysine; alternate" evidence="3">
    <location>
        <position position="432"/>
    </location>
</feature>
<feature type="modified residue" description="N6-acetyllysine; alternate" evidence="23">
    <location>
        <position position="438"/>
    </location>
</feature>
<feature type="modified residue" description="N6-succinyllysine; alternate" evidence="3">
    <location>
        <position position="438"/>
    </location>
</feature>
<feature type="modified residue" description="N6-acetyllysine; alternate" evidence="3">
    <location>
        <position position="443"/>
    </location>
</feature>
<feature type="modified residue" description="N6-succinyllysine; alternate" evidence="3">
    <location>
        <position position="443"/>
    </location>
</feature>
<feature type="modified residue" description="N6-acetyllysine; alternate" evidence="3">
    <location>
        <position position="453"/>
    </location>
</feature>
<feature type="modified residue" description="N6-succinyllysine; alternate" evidence="3">
    <location>
        <position position="453"/>
    </location>
</feature>
<feature type="modified residue" description="N6-succinyllysine" evidence="3">
    <location>
        <position position="464"/>
    </location>
</feature>
<feature type="modified residue" description="N6-acetyllysine; alternate" evidence="23">
    <location>
        <position position="470"/>
    </location>
</feature>
<feature type="modified residue" description="N6-succinyllysine; alternate" evidence="3">
    <location>
        <position position="470"/>
    </location>
</feature>
<feature type="modified residue" description="N6-succinyllysine" evidence="3">
    <location>
        <position position="479"/>
    </location>
</feature>
<feature type="modified residue" description="N6-acetyllysine" evidence="3">
    <location>
        <position position="491"/>
    </location>
</feature>
<feature type="modified residue" description="N6-succinyllysine" evidence="3">
    <location>
        <position position="492"/>
    </location>
</feature>
<feature type="modified residue" description="N6-succinyllysine" evidence="3">
    <location>
        <position position="511"/>
    </location>
</feature>
<feature type="modified residue" description="Phosphoserine" evidence="3">
    <location>
        <position position="516"/>
    </location>
</feature>
<feature type="modified residue" description="N6-succinyllysine" evidence="3">
    <location>
        <position position="522"/>
    </location>
</feature>
<feature type="modified residue" description="N6-succinyllysine" evidence="3">
    <location>
        <position position="534"/>
    </location>
</feature>
<feature type="splice variant" id="VSP_018977" description="In isoform SCP2, isoform 5 and isoform 6." evidence="13 14 15 17 18">
    <location>
        <begin position="1"/>
        <end position="404"/>
    </location>
</feature>
<feature type="splice variant" id="VSP_045187" description="In isoform 4." evidence="12">
    <location>
        <begin position="1"/>
        <end position="81"/>
    </location>
</feature>
<feature type="splice variant" id="VSP_047267" description="In isoform 8." evidence="12">
    <location>
        <begin position="43"/>
        <end position="66"/>
    </location>
</feature>
<feature type="splice variant" id="VSP_042686" description="In isoform 3 and isoform 7." evidence="12 14">
    <location>
        <begin position="67"/>
        <end position="110"/>
    </location>
</feature>
<feature type="splice variant" id="VSP_042687" description="In isoform 3." evidence="14">
    <original>LAQCAELCWQLRGEAGKRQVPGAKVALQHNLGIGGAVVVTLYKMGFPEAASSFRTHQIEAVPTSSASDGFKANLVFKEIEKKLEEEGEQFVKKIGGIFAFKVKDGPGGKEATWVVDVKNGKGSVLPNSDKKADCTITMADSDFLALMTGKMNPQSAFFQGKLKITGNMGLAMKLQNLQLQPGNAKL</original>
    <variation>GHSCS</variation>
    <location>
        <begin position="362"/>
        <end position="547"/>
    </location>
</feature>
<feature type="splice variant" id="VSP_047268" description="In isoform 6." evidence="18">
    <location>
        <begin position="412"/>
        <end position="414"/>
    </location>
</feature>
<feature type="splice variant" id="VSP_047269" description="In isoform 5." evidence="17">
    <original>EGEQFVKKIGGIFAFKV</original>
    <variation>IRRLTAQSQWLTQTSWL</variation>
    <location>
        <begin position="447"/>
        <end position="463"/>
    </location>
</feature>
<feature type="splice variant" id="VSP_047270" description="In isoform 5." evidence="17">
    <location>
        <begin position="464"/>
        <end position="547"/>
    </location>
</feature>
<feature type="sequence variant" id="VAR_035706" description="In a breast cancer sample; somatic mutation." evidence="8">
    <original>A</original>
    <variation>D</variation>
    <location>
        <position position="155"/>
    </location>
</feature>
<feature type="mutagenesis site" description="Strongly reduces sterol carrier and phosphatidylcholine transfer activity; when associated with D-530." evidence="11">
    <original>N</original>
    <variation>D</variation>
    <location>
        <position position="528"/>
    </location>
</feature>
<feature type="mutagenesis site" description="Strongly reduces sterol carrier and phosphatidylcholine transfer activity." evidence="11">
    <original>N</original>
    <variation>I</variation>
    <location>
        <position position="528"/>
    </location>
</feature>
<feature type="mutagenesis site" description="Strongly reduces sterol carrier and phosphatidylcholine transfer activity; when associated with D-528." evidence="11">
    <original>G</original>
    <variation>D</variation>
    <location>
        <position position="530"/>
    </location>
</feature>
<feature type="sequence conflict" description="In Ref. 1; AAB41286." evidence="19" ref="1">
    <original>T</original>
    <variation>A</variation>
    <location>
        <position position="10"/>
    </location>
</feature>
<feature type="sequence conflict" description="In Ref. 5; AK308105." evidence="19" ref="5">
    <original>A</original>
    <variation>V</variation>
    <location>
        <position position="56"/>
    </location>
</feature>
<feature type="sequence conflict" description="In Ref. 5; AK308105." evidence="19" ref="5">
    <original>V</original>
    <variation>A</variation>
    <location>
        <position position="116"/>
    </location>
</feature>
<feature type="sequence conflict" description="In Ref. 5; BAG57810." evidence="19" ref="5">
    <original>K</original>
    <variation>Q</variation>
    <location>
        <position position="341"/>
    </location>
</feature>
<feature type="sequence conflict" description="In Ref. 1; AAB41286." evidence="19" ref="1">
    <original>G</original>
    <variation>D</variation>
    <location>
        <position position="393"/>
    </location>
</feature>
<feature type="sequence conflict" description="In Ref. 4; AAB24921." evidence="19" ref="4">
    <original>A</original>
    <variation>D</variation>
    <location>
        <position position="472"/>
    </location>
</feature>
<feature type="sequence conflict" description="In Ref. 4; AAB24921." evidence="19" ref="4">
    <original>K</original>
    <variation>Q</variation>
    <location>
        <position position="482"/>
    </location>
</feature>
<feature type="sequence conflict" description="In Ref. 4; AAB24921." evidence="19" ref="4">
    <original>D</original>
    <variation>A</variation>
    <location>
        <position position="501"/>
    </location>
</feature>
<feature type="sequence conflict" description="In Ref. 4; AAB24921." evidence="19" ref="4">
    <original>K</original>
    <variation>P</variation>
    <location>
        <position position="522"/>
    </location>
</feature>
<feature type="turn" evidence="25">
    <location>
        <begin position="427"/>
        <end position="430"/>
    </location>
</feature>
<feature type="helix" evidence="25">
    <location>
        <begin position="432"/>
        <end position="454"/>
    </location>
</feature>
<feature type="strand" evidence="25">
    <location>
        <begin position="457"/>
        <end position="465"/>
    </location>
</feature>
<feature type="helix" evidence="25">
    <location>
        <begin position="467"/>
        <end position="469"/>
    </location>
</feature>
<feature type="strand" evidence="25">
    <location>
        <begin position="472"/>
        <end position="480"/>
    </location>
</feature>
<feature type="strand" evidence="24">
    <location>
        <begin position="484"/>
        <end position="487"/>
    </location>
</feature>
<feature type="strand" evidence="25">
    <location>
        <begin position="494"/>
        <end position="500"/>
    </location>
</feature>
<feature type="helix" evidence="25">
    <location>
        <begin position="501"/>
        <end position="508"/>
    </location>
</feature>
<feature type="turn" evidence="25">
    <location>
        <begin position="509"/>
        <end position="511"/>
    </location>
</feature>
<feature type="helix" evidence="25">
    <location>
        <begin position="514"/>
        <end position="519"/>
    </location>
</feature>
<feature type="strand" evidence="25">
    <location>
        <begin position="524"/>
        <end position="527"/>
    </location>
</feature>
<feature type="helix" evidence="25">
    <location>
        <begin position="529"/>
        <end position="533"/>
    </location>
</feature>
<feature type="helix" evidence="25">
    <location>
        <begin position="534"/>
        <end position="538"/>
    </location>
</feature>
<feature type="site" description="Cleavage" evidence="19">
    <location sequence="P22307-2">
        <begin position="20"/>
        <end position="21"/>
    </location>
</feature>
<comment type="function">
    <molecule>Isoform SCPx</molecule>
    <text evidence="2 3 5">Plays a crucial role in the peroxisomal oxidation of branched-chain fatty acids (PubMed:10706581). Catalyzes the last step of the peroxisomal beta-oxidation of branched chain fatty acids and the side chain of the bile acid intermediates di- and trihydroxycoprostanic acids (DHCA and THCA) (PubMed:10706581). Also active with medium and long straight chain 3-oxoacyl-CoAs. Stimulates the microsomal conversion of 7-dehydrocholesterol to cholesterol and transfers phosphatidylcholine and 7-dehydrocholesterol between membrances, in vitro (By similarity). Isoforms SCP2 and SCPx cooperate in peroxisomal oxidation of certain naturally occurring tetramethyl-branched fatty acyl-CoAs (By similarity).</text>
</comment>
<comment type="function">
    <molecule>Isoform SCP2</molecule>
    <text evidence="2 3 9 10 11">Mediates the transfer of all common phospholipids, cholesterol and gangliosides from the endoplasmic reticulum to the plasma membrane. May play a role in regulating steroidogenesis (PubMed:17157249, PubMed:7642518, PubMed:8300590). Stimulates the microsomal conversion of 7-dehydrocholesterol to cholesterol (By similarity). Also binds fatty acids and fatty acyl Coenzyme A (CoA) such as phytanoyl-CoA. Involved in the regulation phospholipid synthesis in endoplasmic reticulum enhancing the incorporation of exogenous fatty acid into glycerides. Seems to stimulate the rate-limiting step in phosphatidic acid formation mediated by GPAT3. Isoforms SCP2 and SCPx cooperate in peroxisomal oxidation of certain naturally occurring tetramethyl-branched fatty acyl-CoAs (By similarity).</text>
</comment>
<comment type="catalytic activity">
    <molecule>Isoform SCPx</molecule>
    <reaction evidence="20">
        <text>choloyl-CoA + propanoyl-CoA = 3alpha,7alpha,12alpha-trihydroxy-24-oxo-5beta-cholestan-26-oyl-CoA + CoA</text>
        <dbReference type="Rhea" id="RHEA:16865"/>
        <dbReference type="ChEBI" id="CHEBI:57287"/>
        <dbReference type="ChEBI" id="CHEBI:57373"/>
        <dbReference type="ChEBI" id="CHEBI:57392"/>
        <dbReference type="ChEBI" id="CHEBI:58507"/>
        <dbReference type="EC" id="2.3.1.176"/>
    </reaction>
    <physiologicalReaction direction="right-to-left" evidence="20">
        <dbReference type="Rhea" id="RHEA:16867"/>
    </physiologicalReaction>
</comment>
<comment type="catalytic activity">
    <molecule>Isoform SCPx</molecule>
    <reaction evidence="2 3">
        <text>4,8,12-trimethyltridecanoyl-CoA + propanoyl-CoA = 3-oxopristanoyl-CoA + CoA</text>
        <dbReference type="Rhea" id="RHEA:10408"/>
        <dbReference type="ChEBI" id="CHEBI:57287"/>
        <dbReference type="ChEBI" id="CHEBI:57291"/>
        <dbReference type="ChEBI" id="CHEBI:57351"/>
        <dbReference type="ChEBI" id="CHEBI:57392"/>
        <dbReference type="EC" id="2.3.1.176"/>
    </reaction>
    <physiologicalReaction direction="right-to-left" evidence="2 3">
        <dbReference type="Rhea" id="RHEA:10410"/>
    </physiologicalReaction>
</comment>
<comment type="catalytic activity">
    <molecule>Isoform SCPx</molecule>
    <reaction evidence="2">
        <text>an acyl-CoA + acetyl-CoA = a 3-oxoacyl-CoA + CoA</text>
        <dbReference type="Rhea" id="RHEA:21564"/>
        <dbReference type="ChEBI" id="CHEBI:57287"/>
        <dbReference type="ChEBI" id="CHEBI:57288"/>
        <dbReference type="ChEBI" id="CHEBI:58342"/>
        <dbReference type="ChEBI" id="CHEBI:90726"/>
        <dbReference type="EC" id="2.3.1.16"/>
    </reaction>
    <physiologicalReaction direction="right-to-left" evidence="2">
        <dbReference type="Rhea" id="RHEA:21566"/>
    </physiologicalReaction>
</comment>
<comment type="catalytic activity">
    <molecule>Isoform SCPx</molecule>
    <reaction evidence="2">
        <text>hexanoyl-CoA + acetyl-CoA = 3-oxooctanoyl-CoA + CoA</text>
        <dbReference type="Rhea" id="RHEA:31203"/>
        <dbReference type="ChEBI" id="CHEBI:57287"/>
        <dbReference type="ChEBI" id="CHEBI:57288"/>
        <dbReference type="ChEBI" id="CHEBI:62619"/>
        <dbReference type="ChEBI" id="CHEBI:62620"/>
    </reaction>
    <physiologicalReaction direction="right-to-left" evidence="2">
        <dbReference type="Rhea" id="RHEA:31205"/>
    </physiologicalReaction>
</comment>
<comment type="catalytic activity">
    <molecule>Isoform SCPx</molecule>
    <reaction evidence="2">
        <text>tetradecanoyl-CoA + acetyl-CoA = 3-oxohexadecanoyl-CoA + CoA</text>
        <dbReference type="Rhea" id="RHEA:18161"/>
        <dbReference type="ChEBI" id="CHEBI:57287"/>
        <dbReference type="ChEBI" id="CHEBI:57288"/>
        <dbReference type="ChEBI" id="CHEBI:57349"/>
        <dbReference type="ChEBI" id="CHEBI:57385"/>
        <dbReference type="EC" id="2.3.1.155"/>
    </reaction>
    <physiologicalReaction direction="right-to-left" evidence="2">
        <dbReference type="Rhea" id="RHEA:18163"/>
    </physiologicalReaction>
</comment>
<comment type="catalytic activity">
    <molecule>Isoform SCPx</molecule>
    <reaction evidence="2">
        <text>3-oxohexadecanedioyl-CoA + CoA = tetradecanedioyl-CoA + acetyl-CoA</text>
        <dbReference type="Rhea" id="RHEA:40343"/>
        <dbReference type="ChEBI" id="CHEBI:57287"/>
        <dbReference type="ChEBI" id="CHEBI:57288"/>
        <dbReference type="ChEBI" id="CHEBI:77081"/>
        <dbReference type="ChEBI" id="CHEBI:77084"/>
    </reaction>
    <physiologicalReaction direction="left-to-right" evidence="2">
        <dbReference type="Rhea" id="RHEA:40344"/>
    </physiologicalReaction>
</comment>
<comment type="catalytic activity">
    <molecule>Isoform SCPx</molecule>
    <reaction evidence="2">
        <text>propanoyl-CoA + tetradecanoyl-CoA = 3-oxo-2-methylhexadecanoyl-CoA + CoA</text>
        <dbReference type="Rhea" id="RHEA:46344"/>
        <dbReference type="ChEBI" id="CHEBI:57287"/>
        <dbReference type="ChEBI" id="CHEBI:57385"/>
        <dbReference type="ChEBI" id="CHEBI:57392"/>
        <dbReference type="ChEBI" id="CHEBI:86042"/>
    </reaction>
    <physiologicalReaction direction="right-to-left" evidence="2">
        <dbReference type="Rhea" id="RHEA:46346"/>
    </physiologicalReaction>
</comment>
<comment type="catalytic activity">
    <molecule>Isoform SCPx</molecule>
    <reaction evidence="2">
        <text>butanoyl-CoA + acetyl-CoA = 3-oxohexanoyl-CoA + CoA</text>
        <dbReference type="Rhea" id="RHEA:31111"/>
        <dbReference type="ChEBI" id="CHEBI:57287"/>
        <dbReference type="ChEBI" id="CHEBI:57288"/>
        <dbReference type="ChEBI" id="CHEBI:57371"/>
        <dbReference type="ChEBI" id="CHEBI:62418"/>
    </reaction>
    <physiologicalReaction direction="right-to-left" evidence="2">
        <dbReference type="Rhea" id="RHEA:31113"/>
    </physiologicalReaction>
</comment>
<comment type="catalytic activity">
    <molecule>Isoform SCPx</molecule>
    <reaction evidence="2">
        <text>octanoyl-CoA + acetyl-CoA = 3-oxodecanoyl-CoA + CoA</text>
        <dbReference type="Rhea" id="RHEA:31087"/>
        <dbReference type="ChEBI" id="CHEBI:57287"/>
        <dbReference type="ChEBI" id="CHEBI:57288"/>
        <dbReference type="ChEBI" id="CHEBI:57386"/>
        <dbReference type="ChEBI" id="CHEBI:62548"/>
    </reaction>
    <physiologicalReaction direction="right-to-left" evidence="2">
        <dbReference type="Rhea" id="RHEA:31089"/>
    </physiologicalReaction>
</comment>
<comment type="catalytic activity">
    <molecule>Isoform SCPx</molecule>
    <reaction evidence="2">
        <text>decanoyl-CoA + acetyl-CoA = 3-oxododecanoyl-CoA + CoA</text>
        <dbReference type="Rhea" id="RHEA:31183"/>
        <dbReference type="ChEBI" id="CHEBI:57287"/>
        <dbReference type="ChEBI" id="CHEBI:57288"/>
        <dbReference type="ChEBI" id="CHEBI:61430"/>
        <dbReference type="ChEBI" id="CHEBI:62615"/>
    </reaction>
    <physiologicalReaction direction="right-to-left" evidence="2">
        <dbReference type="Rhea" id="RHEA:31185"/>
    </physiologicalReaction>
</comment>
<comment type="catalytic activity">
    <molecule>Isoform SCPx</molecule>
    <reaction evidence="2">
        <text>dodecanoyl-CoA + acetyl-CoA = 3-oxotetradecanoyl-CoA + CoA</text>
        <dbReference type="Rhea" id="RHEA:31091"/>
        <dbReference type="ChEBI" id="CHEBI:57287"/>
        <dbReference type="ChEBI" id="CHEBI:57288"/>
        <dbReference type="ChEBI" id="CHEBI:57375"/>
        <dbReference type="ChEBI" id="CHEBI:62543"/>
    </reaction>
    <physiologicalReaction direction="right-to-left" evidence="2">
        <dbReference type="Rhea" id="RHEA:31093"/>
    </physiologicalReaction>
</comment>
<comment type="catalytic activity">
    <molecule>Isoform SCPx</molecule>
    <reaction evidence="2">
        <text>hexadecanoyl-CoA + acetyl-CoA = 3-oxooctadecanoyl-CoA + CoA</text>
        <dbReference type="Rhea" id="RHEA:35279"/>
        <dbReference type="ChEBI" id="CHEBI:57287"/>
        <dbReference type="ChEBI" id="CHEBI:57288"/>
        <dbReference type="ChEBI" id="CHEBI:57379"/>
        <dbReference type="ChEBI" id="CHEBI:71407"/>
    </reaction>
    <physiologicalReaction direction="right-to-left" evidence="2">
        <dbReference type="Rhea" id="RHEA:35281"/>
    </physiologicalReaction>
</comment>
<comment type="catalytic activity">
    <molecule>Isoform SCPx</molecule>
    <reaction evidence="2">
        <text>3-oxo-(9Z-octadecenoyl)-CoA + CoA = (7Z)-hexadecenoyl-CoA + acetyl-CoA</text>
        <dbReference type="Rhea" id="RHEA:47400"/>
        <dbReference type="ChEBI" id="CHEBI:57287"/>
        <dbReference type="ChEBI" id="CHEBI:57288"/>
        <dbReference type="ChEBI" id="CHEBI:87695"/>
        <dbReference type="ChEBI" id="CHEBI:87698"/>
    </reaction>
    <physiologicalReaction direction="left-to-right" evidence="2">
        <dbReference type="Rhea" id="RHEA:47401"/>
    </physiologicalReaction>
</comment>
<comment type="catalytic activity">
    <molecule>Isoform SCPx</molecule>
    <reaction evidence="2">
        <text>7-dehydrocholesterol(in) = 7-dehydrocholesterol(out)</text>
        <dbReference type="Rhea" id="RHEA:62960"/>
        <dbReference type="ChEBI" id="CHEBI:17759"/>
    </reaction>
</comment>
<comment type="catalytic activity">
    <molecule>Isoform SCP2</molecule>
    <reaction evidence="10">
        <text>7-dehydrocholesterol(in) = 7-dehydrocholesterol(out)</text>
        <dbReference type="Rhea" id="RHEA:62960"/>
        <dbReference type="ChEBI" id="CHEBI:17759"/>
    </reaction>
</comment>
<comment type="subunit">
    <molecule>Isoform SCP2</molecule>
    <text evidence="9">Interacts with PEX5; the interaction is essential for peroxisomal import.</text>
</comment>
<comment type="interaction">
    <interactant intactId="EBI-1050999">
        <id>P22307</id>
    </interactant>
    <interactant intactId="EBI-603614">
        <id>Q03135</id>
        <label>CAV1</label>
    </interactant>
    <organismsDiffer>false</organismsDiffer>
    <experiments>3</experiments>
</comment>
<comment type="interaction">
    <interactant intactId="EBI-1050999">
        <id>P22307</id>
    </interactant>
    <interactant intactId="EBI-358993">
        <id>Q15645</id>
        <label>TRIP13</label>
    </interactant>
    <organismsDiffer>false</organismsDiffer>
    <experiments>4</experiments>
</comment>
<comment type="interaction">
    <interactant intactId="EBI-1050999">
        <id>P22307</id>
    </interactant>
    <interactant intactId="EBI-1161338">
        <id>P49817</id>
        <label>Cav1</label>
    </interactant>
    <organismsDiffer>true</organismsDiffer>
    <experiments>3</experiments>
</comment>
<comment type="interaction">
    <interactant intactId="EBI-25834804">
        <id>P22307-3</id>
    </interactant>
    <interactant intactId="EBI-718729">
        <id>P55212</id>
        <label>CASP6</label>
    </interactant>
    <organismsDiffer>false</organismsDiffer>
    <experiments>3</experiments>
</comment>
<comment type="interaction">
    <interactant intactId="EBI-25834804">
        <id>P22307-3</id>
    </interactant>
    <interactant intactId="EBI-473886">
        <id>O00291</id>
        <label>HIP1</label>
    </interactant>
    <organismsDiffer>false</organismsDiffer>
    <experiments>3</experiments>
</comment>
<comment type="interaction">
    <interactant intactId="EBI-25834804">
        <id>P22307-3</id>
    </interactant>
    <interactant intactId="EBI-21591415">
        <id>P13473-2</id>
        <label>LAMP2</label>
    </interactant>
    <organismsDiffer>false</organismsDiffer>
    <experiments>3</experiments>
</comment>
<comment type="interaction">
    <interactant intactId="EBI-25834804">
        <id>P22307-3</id>
    </interactant>
    <interactant intactId="EBI-5280197">
        <id>O75400-2</id>
        <label>PRPF40A</label>
    </interactant>
    <organismsDiffer>false</organismsDiffer>
    <experiments>3</experiments>
</comment>
<comment type="interaction">
    <interactant intactId="EBI-25834804">
        <id>P22307-3</id>
    </interactant>
    <interactant intactId="EBI-286642">
        <id>P62826</id>
        <label>RAN</label>
    </interactant>
    <organismsDiffer>false</organismsDiffer>
    <experiments>3</experiments>
</comment>
<comment type="subcellular location">
    <molecule>Isoform SCP2</molecule>
    <subcellularLocation>
        <location evidence="3">Peroxisome</location>
    </subcellularLocation>
    <subcellularLocation>
        <location evidence="5 9">Cytoplasm</location>
    </subcellularLocation>
    <subcellularLocation>
        <location evidence="9">Mitochondrion</location>
    </subcellularLocation>
    <subcellularLocation>
        <location evidence="3">Endoplasmic reticulum</location>
    </subcellularLocation>
    <subcellularLocation>
        <location evidence="3">Mitochondrion</location>
    </subcellularLocation>
</comment>
<comment type="subcellular location">
    <molecule>Isoform SCPx</molecule>
    <subcellularLocation>
        <location evidence="2">Peroxisome</location>
    </subcellularLocation>
</comment>
<comment type="alternative products">
    <event type="alternative promoter"/>
    <event type="alternative splicing"/>
    <isoform>
        <id>P22307-1</id>
        <name evidence="16">SCPx</name>
        <sequence type="displayed"/>
    </isoform>
    <isoform>
        <id>P22307-2</id>
        <name evidence="16">SCP2</name>
        <sequence type="described" ref="VSP_018977"/>
    </isoform>
    <isoform>
        <id>P22307-3</id>
        <name>3</name>
        <sequence type="described" ref="VSP_042686 VSP_042687"/>
    </isoform>
    <isoform>
        <id>P22307-4</id>
        <name>4</name>
        <sequence type="described" ref="VSP_045187"/>
    </isoform>
    <isoform>
        <id>P22307-5</id>
        <name>5</name>
        <sequence type="described" ref="VSP_018977 VSP_047269 VSP_047270"/>
    </isoform>
    <isoform>
        <id>P22307-6</id>
        <name>6</name>
        <sequence type="described" ref="VSP_018977 VSP_047268"/>
    </isoform>
    <isoform>
        <id>P22307-7</id>
        <name>7</name>
        <sequence type="described" ref="VSP_042686"/>
    </isoform>
    <isoform>
        <id>P22307-8</id>
        <name>8</name>
        <sequence type="described" ref="VSP_047267"/>
    </isoform>
</comment>
<comment type="tissue specificity">
    <text>Liver, fibroblasts, and placenta.</text>
</comment>
<comment type="induction">
    <text evidence="6">Up-regulated by 4-hydroxy-tamoxifen.</text>
</comment>
<comment type="PTM">
    <molecule>Isoform SCP2</molecule>
    <text evidence="1">preSCP2, a protein with a molecular mass of about 15 kDa, is processed into its mature form (SCP2) by proteolytic cleavage of a 20 residue leader sequence after translocation into peroxisomes.</text>
</comment>
<comment type="disease" evidence="7">
    <disease id="DI-02987">
        <name>Leukoencephalopathy with dystonia and motor neuropathy</name>
        <acronym>LKDMN</acronym>
        <description>A syndrome characterized by leukoencephalopathy, dystonic head tremor, spasmodic torticollis and reduced tendon reflexes in lower extremities. Additional features include hyposmia, pathologic saccadic eye movements, a slight hypoacusis, accumulation of branched-chain pristanic acid in plasma, and the presence of abnormal bile alcohol glucuronides in urine.</description>
        <dbReference type="MIM" id="613724"/>
    </disease>
    <text>The disease is caused by variants affecting the gene represented in this entry.</text>
</comment>
<comment type="disease">
    <text evidence="10">Expression at protein level is almost abolished in Zellweger syndrome. Cholesterol transfer from the endoplasmic reticulum to the plasma membrane was reduced in patient fibroblasts compared to controls.</text>
</comment>
<comment type="miscellaneous">
    <molecule>Isoform SCP2</molecule>
    <text evidence="21">Contains a putative mitochondrial transit peptide at positions 1-20.</text>
</comment>
<comment type="miscellaneous">
    <molecule>Isoform 4</molecule>
    <text evidence="19">Produced by alternative splicing.</text>
</comment>
<comment type="miscellaneous">
    <molecule>Isoform 7</molecule>
    <text evidence="19">Produced by alternative splicing.</text>
</comment>
<comment type="miscellaneous">
    <molecule>Isoform 8</molecule>
    <text evidence="19">Produced by alternative splicing.</text>
</comment>
<comment type="similarity">
    <text evidence="19">In the N-terminal section; belongs to the thiolase-like superfamily. Thiolase family.</text>
</comment>
<comment type="sequence caution" evidence="19">
    <conflict type="erroneous initiation">
        <sequence resource="EMBL-CDS" id="AAA03558"/>
    </conflict>
    <text>Truncated N-terminus.</text>
</comment>
<accession>P22307</accession>
<accession>A6NM69</accession>
<accession>B4DGJ9</accession>
<accession>B4DHP6</accession>
<accession>C9JC79</accession>
<accession>D3DQ37</accession>
<accession>E1B6W5</accession>
<accession>F2Z3J1</accession>
<accession>Q15432</accession>
<accession>Q16622</accession>
<accession>Q5VVZ1</accession>
<accession>Q6NXF4</accession>
<accession>Q99430</accession>
<evidence type="ECO:0000250" key="1">
    <source>
        <dbReference type="UniProtKB" id="O62742"/>
    </source>
</evidence>
<evidence type="ECO:0000250" key="2">
    <source>
        <dbReference type="UniProtKB" id="P11915"/>
    </source>
</evidence>
<evidence type="ECO:0000250" key="3">
    <source>
        <dbReference type="UniProtKB" id="P32020"/>
    </source>
</evidence>
<evidence type="ECO:0000255" key="4"/>
<evidence type="ECO:0000269" key="5">
    <source>
    </source>
</evidence>
<evidence type="ECO:0000269" key="6">
    <source>
    </source>
</evidence>
<evidence type="ECO:0000269" key="7">
    <source>
    </source>
</evidence>
<evidence type="ECO:0000269" key="8">
    <source>
    </source>
</evidence>
<evidence type="ECO:0000269" key="9">
    <source>
    </source>
</evidence>
<evidence type="ECO:0000269" key="10">
    <source>
    </source>
</evidence>
<evidence type="ECO:0000269" key="11">
    <source>
    </source>
</evidence>
<evidence type="ECO:0000303" key="12">
    <source>
    </source>
</evidence>
<evidence type="ECO:0000303" key="13">
    <source>
    </source>
</evidence>
<evidence type="ECO:0000303" key="14">
    <source>
    </source>
</evidence>
<evidence type="ECO:0000303" key="15">
    <source>
    </source>
</evidence>
<evidence type="ECO:0000303" key="16">
    <source>
    </source>
</evidence>
<evidence type="ECO:0000303" key="17">
    <source ref="10"/>
</evidence>
<evidence type="ECO:0000303" key="18">
    <source ref="6"/>
</evidence>
<evidence type="ECO:0000305" key="19"/>
<evidence type="ECO:0000305" key="20">
    <source>
    </source>
</evidence>
<evidence type="ECO:0000305" key="21">
    <source>
    </source>
</evidence>
<evidence type="ECO:0000312" key="22">
    <source>
        <dbReference type="HGNC" id="HGNC:10606"/>
    </source>
</evidence>
<evidence type="ECO:0007744" key="23">
    <source>
    </source>
</evidence>
<evidence type="ECO:0007829" key="24">
    <source>
        <dbReference type="PDB" id="1QND"/>
    </source>
</evidence>
<evidence type="ECO:0007829" key="25">
    <source>
        <dbReference type="PDB" id="2C0L"/>
    </source>
</evidence>
<reference key="1">
    <citation type="journal article" date="1994" name="Genomics">
        <title>The structure of the human sterol carrier protein X/sterol carrier protein 2 gene (SCP2).</title>
        <authorList>
            <person name="Ohba T."/>
            <person name="Rennert H."/>
            <person name="Pfeifer S.M."/>
            <person name="He Z."/>
            <person name="Yamamoto R."/>
            <person name="Holt J.A."/>
            <person name="Billheimer J.T."/>
            <person name="Strauss J.F. III"/>
        </authorList>
    </citation>
    <scope>NUCLEOTIDE SEQUENCE [GENOMIC DNA] (ISOFORM SCPX)</scope>
    <source>
        <tissue>Liver</tissue>
    </source>
</reference>
<reference key="2">
    <citation type="journal article" date="1991" name="DNA Cell Biol.">
        <title>cDNAs encoding members of a family of proteins related to human sterol carrier protein 2 and assignment of the gene to human chromosome 1 p21-pter.</title>
        <authorList>
            <person name="He Z."/>
            <person name="Yamamoto R."/>
            <person name="Furth E.E."/>
            <person name="Schantz L.J."/>
            <person name="Naylor S.L."/>
            <person name="George H."/>
            <person name="Billheimer J.T."/>
            <person name="Strauss J.F. III"/>
        </authorList>
    </citation>
    <scope>NUCLEOTIDE SEQUENCE [MRNA] (ISOFORM SCPX)</scope>
    <source>
        <tissue>Liver</tissue>
    </source>
</reference>
<reference key="3">
    <citation type="journal article" date="1991" name="Proc. Natl. Acad. Sci. U.S.A.">
        <title>Cloning and expression of a cDNA encoding human sterol carrier protein 2.</title>
        <authorList>
            <person name="Yamamoto R."/>
            <person name="Kallen C.B."/>
            <person name="Babalola G.O."/>
            <person name="Rennert H."/>
            <person name="Billheimer J.T."/>
            <person name="Strauss J.F. III"/>
        </authorList>
    </citation>
    <scope>NUCLEOTIDE SEQUENCE [MRNA] (ISOFORM SCP2)</scope>
    <source>
        <tissue>Liver</tissue>
    </source>
</reference>
<reference key="4">
    <citation type="journal article" date="1992" name="Hokkaido Igaku Zasshi">
        <title>Localization of human sterol carrier protein 2 gene and cDNA expression in COS-7 cell.</title>
        <authorList>
            <person name="Yamamoto R."/>
        </authorList>
    </citation>
    <scope>NUCLEOTIDE SEQUENCE [MRNA] (ISOFORM SCP2)</scope>
    <source>
        <tissue>Liver</tissue>
    </source>
</reference>
<reference key="5">
    <citation type="journal article" date="2004" name="Nat. Genet.">
        <title>Complete sequencing and characterization of 21,243 full-length human cDNAs.</title>
        <authorList>
            <person name="Ota T."/>
            <person name="Suzuki Y."/>
            <person name="Nishikawa T."/>
            <person name="Otsuki T."/>
            <person name="Sugiyama T."/>
            <person name="Irie R."/>
            <person name="Wakamatsu A."/>
            <person name="Hayashi K."/>
            <person name="Sato H."/>
            <person name="Nagai K."/>
            <person name="Kimura K."/>
            <person name="Makita H."/>
            <person name="Sekine M."/>
            <person name="Obayashi M."/>
            <person name="Nishi T."/>
            <person name="Shibahara T."/>
            <person name="Tanaka T."/>
            <person name="Ishii S."/>
            <person name="Yamamoto J."/>
            <person name="Saito K."/>
            <person name="Kawai Y."/>
            <person name="Isono Y."/>
            <person name="Nakamura Y."/>
            <person name="Nagahari K."/>
            <person name="Murakami K."/>
            <person name="Yasuda T."/>
            <person name="Iwayanagi T."/>
            <person name="Wagatsuma M."/>
            <person name="Shiratori A."/>
            <person name="Sudo H."/>
            <person name="Hosoiri T."/>
            <person name="Kaku Y."/>
            <person name="Kodaira H."/>
            <person name="Kondo H."/>
            <person name="Sugawara M."/>
            <person name="Takahashi M."/>
            <person name="Kanda K."/>
            <person name="Yokoi T."/>
            <person name="Furuya T."/>
            <person name="Kikkawa E."/>
            <person name="Omura Y."/>
            <person name="Abe K."/>
            <person name="Kamihara K."/>
            <person name="Katsuta N."/>
            <person name="Sato K."/>
            <person name="Tanikawa M."/>
            <person name="Yamazaki M."/>
            <person name="Ninomiya K."/>
            <person name="Ishibashi T."/>
            <person name="Yamashita H."/>
            <person name="Murakawa K."/>
            <person name="Fujimori K."/>
            <person name="Tanai H."/>
            <person name="Kimata M."/>
            <person name="Watanabe M."/>
            <person name="Hiraoka S."/>
            <person name="Chiba Y."/>
            <person name="Ishida S."/>
            <person name="Ono Y."/>
            <person name="Takiguchi S."/>
            <person name="Watanabe S."/>
            <person name="Yosida M."/>
            <person name="Hotuta T."/>
            <person name="Kusano J."/>
            <person name="Kanehori K."/>
            <person name="Takahashi-Fujii A."/>
            <person name="Hara H."/>
            <person name="Tanase T.-O."/>
            <person name="Nomura Y."/>
            <person name="Togiya S."/>
            <person name="Komai F."/>
            <person name="Hara R."/>
            <person name="Takeuchi K."/>
            <person name="Arita M."/>
            <person name="Imose N."/>
            <person name="Musashino K."/>
            <person name="Yuuki H."/>
            <person name="Oshima A."/>
            <person name="Sasaki N."/>
            <person name="Aotsuka S."/>
            <person name="Yoshikawa Y."/>
            <person name="Matsunawa H."/>
            <person name="Ichihara T."/>
            <person name="Shiohata N."/>
            <person name="Sano S."/>
            <person name="Moriya S."/>
            <person name="Momiyama H."/>
            <person name="Satoh N."/>
            <person name="Takami S."/>
            <person name="Terashima Y."/>
            <person name="Suzuki O."/>
            <person name="Nakagawa S."/>
            <person name="Senoh A."/>
            <person name="Mizoguchi H."/>
            <person name="Goto Y."/>
            <person name="Shimizu F."/>
            <person name="Wakebe H."/>
            <person name="Hishigaki H."/>
            <person name="Watanabe T."/>
            <person name="Sugiyama A."/>
            <person name="Takemoto M."/>
            <person name="Kawakami B."/>
            <person name="Yamazaki M."/>
            <person name="Watanabe K."/>
            <person name="Kumagai A."/>
            <person name="Itakura S."/>
            <person name="Fukuzumi Y."/>
            <person name="Fujimori Y."/>
            <person name="Komiyama M."/>
            <person name="Tashiro H."/>
            <person name="Tanigami A."/>
            <person name="Fujiwara T."/>
            <person name="Ono T."/>
            <person name="Yamada K."/>
            <person name="Fujii Y."/>
            <person name="Ozaki K."/>
            <person name="Hirao M."/>
            <person name="Ohmori Y."/>
            <person name="Kawabata A."/>
            <person name="Hikiji T."/>
            <person name="Kobatake N."/>
            <person name="Inagaki H."/>
            <person name="Ikema Y."/>
            <person name="Okamoto S."/>
            <person name="Okitani R."/>
            <person name="Kawakami T."/>
            <person name="Noguchi S."/>
            <person name="Itoh T."/>
            <person name="Shigeta K."/>
            <person name="Senba T."/>
            <person name="Matsumura K."/>
            <person name="Nakajima Y."/>
            <person name="Mizuno T."/>
            <person name="Morinaga M."/>
            <person name="Sasaki M."/>
            <person name="Togashi T."/>
            <person name="Oyama M."/>
            <person name="Hata H."/>
            <person name="Watanabe M."/>
            <person name="Komatsu T."/>
            <person name="Mizushima-Sugano J."/>
            <person name="Satoh T."/>
            <person name="Shirai Y."/>
            <person name="Takahashi Y."/>
            <person name="Nakagawa K."/>
            <person name="Okumura K."/>
            <person name="Nagase T."/>
            <person name="Nomura N."/>
            <person name="Kikuchi H."/>
            <person name="Masuho Y."/>
            <person name="Yamashita R."/>
            <person name="Nakai K."/>
            <person name="Yada T."/>
            <person name="Nakamura Y."/>
            <person name="Ohara O."/>
            <person name="Isogai T."/>
            <person name="Sugano S."/>
        </authorList>
    </citation>
    <scope>NUCLEOTIDE SEQUENCE [LARGE SCALE MRNA] (ISOFORMS 4 AND 8)</scope>
    <scope>NUCLEOTIDE SEQUENCE [LARGE SCALE MRNA] OF 1-218 (ISOFORM 7)</scope>
    <source>
        <tissue>Brain</tissue>
        <tissue>Caudate nucleus</tissue>
        <tissue>Tongue</tissue>
    </source>
</reference>
<reference key="6">
    <citation type="submission" date="2005-06" db="EMBL/GenBank/DDBJ databases">
        <authorList>
            <person name="Heil O."/>
            <person name="Ebert L."/>
            <person name="Hennig S."/>
            <person name="Henze S."/>
            <person name="Radelof U."/>
            <person name="Schneider D."/>
            <person name="Korn B."/>
        </authorList>
    </citation>
    <scope>NUCLEOTIDE SEQUENCE [LARGE SCALE MRNA] (ISOFORM 6)</scope>
</reference>
<reference key="7">
    <citation type="journal article" date="2006" name="Nature">
        <title>The DNA sequence and biological annotation of human chromosome 1.</title>
        <authorList>
            <person name="Gregory S.G."/>
            <person name="Barlow K.F."/>
            <person name="McLay K.E."/>
            <person name="Kaul R."/>
            <person name="Swarbreck D."/>
            <person name="Dunham A."/>
            <person name="Scott C.E."/>
            <person name="Howe K.L."/>
            <person name="Woodfine K."/>
            <person name="Spencer C.C.A."/>
            <person name="Jones M.C."/>
            <person name="Gillson C."/>
            <person name="Searle S."/>
            <person name="Zhou Y."/>
            <person name="Kokocinski F."/>
            <person name="McDonald L."/>
            <person name="Evans R."/>
            <person name="Phillips K."/>
            <person name="Atkinson A."/>
            <person name="Cooper R."/>
            <person name="Jones C."/>
            <person name="Hall R.E."/>
            <person name="Andrews T.D."/>
            <person name="Lloyd C."/>
            <person name="Ainscough R."/>
            <person name="Almeida J.P."/>
            <person name="Ambrose K.D."/>
            <person name="Anderson F."/>
            <person name="Andrew R.W."/>
            <person name="Ashwell R.I.S."/>
            <person name="Aubin K."/>
            <person name="Babbage A.K."/>
            <person name="Bagguley C.L."/>
            <person name="Bailey J."/>
            <person name="Beasley H."/>
            <person name="Bethel G."/>
            <person name="Bird C.P."/>
            <person name="Bray-Allen S."/>
            <person name="Brown J.Y."/>
            <person name="Brown A.J."/>
            <person name="Buckley D."/>
            <person name="Burton J."/>
            <person name="Bye J."/>
            <person name="Carder C."/>
            <person name="Chapman J.C."/>
            <person name="Clark S.Y."/>
            <person name="Clarke G."/>
            <person name="Clee C."/>
            <person name="Cobley V."/>
            <person name="Collier R.E."/>
            <person name="Corby N."/>
            <person name="Coville G.J."/>
            <person name="Davies J."/>
            <person name="Deadman R."/>
            <person name="Dunn M."/>
            <person name="Earthrowl M."/>
            <person name="Ellington A.G."/>
            <person name="Errington H."/>
            <person name="Frankish A."/>
            <person name="Frankland J."/>
            <person name="French L."/>
            <person name="Garner P."/>
            <person name="Garnett J."/>
            <person name="Gay L."/>
            <person name="Ghori M.R.J."/>
            <person name="Gibson R."/>
            <person name="Gilby L.M."/>
            <person name="Gillett W."/>
            <person name="Glithero R.J."/>
            <person name="Grafham D.V."/>
            <person name="Griffiths C."/>
            <person name="Griffiths-Jones S."/>
            <person name="Grocock R."/>
            <person name="Hammond S."/>
            <person name="Harrison E.S.I."/>
            <person name="Hart E."/>
            <person name="Haugen E."/>
            <person name="Heath P.D."/>
            <person name="Holmes S."/>
            <person name="Holt K."/>
            <person name="Howden P.J."/>
            <person name="Hunt A.R."/>
            <person name="Hunt S.E."/>
            <person name="Hunter G."/>
            <person name="Isherwood J."/>
            <person name="James R."/>
            <person name="Johnson C."/>
            <person name="Johnson D."/>
            <person name="Joy A."/>
            <person name="Kay M."/>
            <person name="Kershaw J.K."/>
            <person name="Kibukawa M."/>
            <person name="Kimberley A.M."/>
            <person name="King A."/>
            <person name="Knights A.J."/>
            <person name="Lad H."/>
            <person name="Laird G."/>
            <person name="Lawlor S."/>
            <person name="Leongamornlert D.A."/>
            <person name="Lloyd D.M."/>
            <person name="Loveland J."/>
            <person name="Lovell J."/>
            <person name="Lush M.J."/>
            <person name="Lyne R."/>
            <person name="Martin S."/>
            <person name="Mashreghi-Mohammadi M."/>
            <person name="Matthews L."/>
            <person name="Matthews N.S.W."/>
            <person name="McLaren S."/>
            <person name="Milne S."/>
            <person name="Mistry S."/>
            <person name="Moore M.J.F."/>
            <person name="Nickerson T."/>
            <person name="O'Dell C.N."/>
            <person name="Oliver K."/>
            <person name="Palmeiri A."/>
            <person name="Palmer S.A."/>
            <person name="Parker A."/>
            <person name="Patel D."/>
            <person name="Pearce A.V."/>
            <person name="Peck A.I."/>
            <person name="Pelan S."/>
            <person name="Phelps K."/>
            <person name="Phillimore B.J."/>
            <person name="Plumb R."/>
            <person name="Rajan J."/>
            <person name="Raymond C."/>
            <person name="Rouse G."/>
            <person name="Saenphimmachak C."/>
            <person name="Sehra H.K."/>
            <person name="Sheridan E."/>
            <person name="Shownkeen R."/>
            <person name="Sims S."/>
            <person name="Skuce C.D."/>
            <person name="Smith M."/>
            <person name="Steward C."/>
            <person name="Subramanian S."/>
            <person name="Sycamore N."/>
            <person name="Tracey A."/>
            <person name="Tromans A."/>
            <person name="Van Helmond Z."/>
            <person name="Wall M."/>
            <person name="Wallis J.M."/>
            <person name="White S."/>
            <person name="Whitehead S.L."/>
            <person name="Wilkinson J.E."/>
            <person name="Willey D.L."/>
            <person name="Williams H."/>
            <person name="Wilming L."/>
            <person name="Wray P.W."/>
            <person name="Wu Z."/>
            <person name="Coulson A."/>
            <person name="Vaudin M."/>
            <person name="Sulston J.E."/>
            <person name="Durbin R.M."/>
            <person name="Hubbard T."/>
            <person name="Wooster R."/>
            <person name="Dunham I."/>
            <person name="Carter N.P."/>
            <person name="McVean G."/>
            <person name="Ross M.T."/>
            <person name="Harrow J."/>
            <person name="Olson M.V."/>
            <person name="Beck S."/>
            <person name="Rogers J."/>
            <person name="Bentley D.R."/>
        </authorList>
    </citation>
    <scope>NUCLEOTIDE SEQUENCE [LARGE SCALE GENOMIC DNA]</scope>
</reference>
<reference key="8">
    <citation type="submission" date="2005-09" db="EMBL/GenBank/DDBJ databases">
        <authorList>
            <person name="Mural R.J."/>
            <person name="Istrail S."/>
            <person name="Sutton G.G."/>
            <person name="Florea L."/>
            <person name="Halpern A.L."/>
            <person name="Mobarry C.M."/>
            <person name="Lippert R."/>
            <person name="Walenz B."/>
            <person name="Shatkay H."/>
            <person name="Dew I."/>
            <person name="Miller J.R."/>
            <person name="Flanigan M.J."/>
            <person name="Edwards N.J."/>
            <person name="Bolanos R."/>
            <person name="Fasulo D."/>
            <person name="Halldorsson B.V."/>
            <person name="Hannenhalli S."/>
            <person name="Turner R."/>
            <person name="Yooseph S."/>
            <person name="Lu F."/>
            <person name="Nusskern D.R."/>
            <person name="Shue B.C."/>
            <person name="Zheng X.H."/>
            <person name="Zhong F."/>
            <person name="Delcher A.L."/>
            <person name="Huson D.H."/>
            <person name="Kravitz S.A."/>
            <person name="Mouchard L."/>
            <person name="Reinert K."/>
            <person name="Remington K.A."/>
            <person name="Clark A.G."/>
            <person name="Waterman M.S."/>
            <person name="Eichler E.E."/>
            <person name="Adams M.D."/>
            <person name="Hunkapiller M.W."/>
            <person name="Myers E.W."/>
            <person name="Venter J.C."/>
        </authorList>
    </citation>
    <scope>NUCLEOTIDE SEQUENCE [LARGE SCALE GENOMIC DNA]</scope>
</reference>
<reference key="9">
    <citation type="journal article" date="2004" name="Genome Res.">
        <title>The status, quality, and expansion of the NIH full-length cDNA project: the Mammalian Gene Collection (MGC).</title>
        <authorList>
            <consortium name="The MGC Project Team"/>
        </authorList>
    </citation>
    <scope>NUCLEOTIDE SEQUENCE [LARGE SCALE MRNA] (ISOFORMS 3 AND SCP2)</scope>
    <source>
        <tissue>Brain</tissue>
    </source>
</reference>
<reference key="10">
    <citation type="submission" date="2003-03" db="EMBL/GenBank/DDBJ databases">
        <authorList>
            <consortium name="The MGC Project Team"/>
        </authorList>
    </citation>
    <scope>NUCLEOTIDE SEQUENCE [LARGE SCALE MRNA] (ISOFORM 5)</scope>
</reference>
<reference key="11">
    <citation type="submission" date="2005-03" db="UniProtKB">
        <authorList>
            <person name="Bienvenut W.V."/>
        </authorList>
    </citation>
    <scope>PROTEIN SEQUENCE OF 455-462; 512-522 AND 535-546</scope>
    <scope>IDENTIFICATION BY MASS SPECTROMETRY</scope>
    <source>
        <tissue>B-cell lymphoma</tissue>
    </source>
</reference>
<reference key="12">
    <citation type="journal article" date="1994" name="J. Biol. Chem.">
        <title>Structure-activity studies of human sterol carrier protein 2.</title>
        <authorList>
            <person name="Seedorf U."/>
            <person name="Scheek S."/>
            <person name="Engel T."/>
            <person name="Steif C."/>
            <person name="Hinz H.-J."/>
            <person name="Assmann G."/>
        </authorList>
    </citation>
    <scope>MUTAGENESIS OF ASN-528 AND GLY-530</scope>
    <scope>FUNCTION</scope>
</reference>
<reference key="13">
    <citation type="journal article" date="1995" name="J. Biol. Chem.">
        <title>Sterol carrier protein-2 is involved in cholesterol transfer from the endoplasmic reticulum to the plasma membrane in human fibroblasts.</title>
        <authorList>
            <person name="Puglielli L."/>
            <person name="Rigotti A."/>
            <person name="Greco A.V."/>
            <person name="Santos M.J."/>
            <person name="Nervi F."/>
        </authorList>
    </citation>
    <scope>FUNCTION (ISOFORM SCP2)</scope>
    <scope>INVOLVEMENT IN DISEASE</scope>
    <scope>CATALYTIC ACTIVITY (ISOFORM SCP2)</scope>
</reference>
<reference key="14">
    <citation type="journal article" date="2000" name="J. Lipid Res.">
        <title>Peroxisomal fatty acid oxidation disorders and 58 kDa sterol carrier protein X (SCPx). Activity measurements in liver and fibroblasts using a newly developed method.</title>
        <authorList>
            <person name="Ferdinandusse S."/>
            <person name="Denis S."/>
            <person name="van Berkel E."/>
            <person name="Dacremont G."/>
            <person name="Wanders R.J."/>
        </authorList>
    </citation>
    <scope>FUNCTION (ISOFORM SCPX)</scope>
    <scope>CATALYTIC ACTIVITY</scope>
</reference>
<reference key="15">
    <citation type="journal article" date="2004" name="J. Lipid Res.">
        <title>Regulation of sterol carrier protein gene expression by the forkhead transcription factor FOXO3a.</title>
        <authorList>
            <person name="Dansen T.B."/>
            <person name="Kops G.J."/>
            <person name="Denis S."/>
            <person name="Jelluma N."/>
            <person name="Wanders R.J."/>
            <person name="Bos J.L."/>
            <person name="Burgering B.M."/>
            <person name="Wirtz K.W."/>
        </authorList>
    </citation>
    <scope>ALTERNATIVE PROMOTER USAGE</scope>
    <scope>INDUCTION BY 4-HYDROXY-TAMOXIFEN</scope>
</reference>
<reference key="16">
    <citation type="journal article" date="2009" name="Science">
        <title>Lysine acetylation targets protein complexes and co-regulates major cellular functions.</title>
        <authorList>
            <person name="Choudhary C."/>
            <person name="Kumar C."/>
            <person name="Gnad F."/>
            <person name="Nielsen M.L."/>
            <person name="Rehman M."/>
            <person name="Walther T.C."/>
            <person name="Olsen J.V."/>
            <person name="Mann M."/>
        </authorList>
    </citation>
    <scope>ACETYLATION [LARGE SCALE ANALYSIS] AT LYS-183; LYS-438 AND LYS-470</scope>
    <scope>IDENTIFICATION BY MASS SPECTROMETRY [LARGE SCALE ANALYSIS]</scope>
</reference>
<reference key="17">
    <citation type="journal article" date="2011" name="BMC Syst. Biol.">
        <title>Initial characterization of the human central proteome.</title>
        <authorList>
            <person name="Burkard T.R."/>
            <person name="Planyavsky M."/>
            <person name="Kaupe I."/>
            <person name="Breitwieser F.P."/>
            <person name="Buerckstuemmer T."/>
            <person name="Bennett K.L."/>
            <person name="Superti-Furga G."/>
            <person name="Colinge J."/>
        </authorList>
    </citation>
    <scope>IDENTIFICATION BY MASS SPECTROMETRY [LARGE SCALE ANALYSIS]</scope>
</reference>
<reference key="18">
    <citation type="journal article" date="2014" name="J. Proteomics">
        <title>An enzyme assisted RP-RPLC approach for in-depth analysis of human liver phosphoproteome.</title>
        <authorList>
            <person name="Bian Y."/>
            <person name="Song C."/>
            <person name="Cheng K."/>
            <person name="Dong M."/>
            <person name="Wang F."/>
            <person name="Huang J."/>
            <person name="Sun D."/>
            <person name="Wang L."/>
            <person name="Ye M."/>
            <person name="Zou H."/>
        </authorList>
    </citation>
    <scope>IDENTIFICATION BY MASS SPECTROMETRY [LARGE SCALE ANALYSIS]</scope>
    <source>
        <tissue>Liver</tissue>
    </source>
</reference>
<reference key="19">
    <citation type="journal article" date="2015" name="Proteomics">
        <title>N-terminome analysis of the human mitochondrial proteome.</title>
        <authorList>
            <person name="Vaca Jacome A.S."/>
            <person name="Rabilloud T."/>
            <person name="Schaeffer-Reiss C."/>
            <person name="Rompais M."/>
            <person name="Ayoub D."/>
            <person name="Lane L."/>
            <person name="Bairoch A."/>
            <person name="Van Dorsselaer A."/>
            <person name="Carapito C."/>
        </authorList>
    </citation>
    <scope>IDENTIFICATION BY MASS SPECTROMETRY [LARGE SCALE ANALYSIS]</scope>
</reference>
<reference key="20">
    <citation type="journal article" date="1993" name="FEBS Lett.">
        <title>NMR determination of the secondary structure and the three-dimensional polypeptide backbone fold of the human sterol carrier protein 2.</title>
        <authorList>
            <person name="Szyperski T."/>
            <person name="Scheek S."/>
            <person name="Johansson J."/>
            <person name="Assmann G."/>
            <person name="Seedorf U."/>
            <person name="Wuethrich K."/>
        </authorList>
    </citation>
    <scope>STRUCTURE BY NMR OF SCP2</scope>
</reference>
<reference key="21">
    <citation type="journal article" date="2006" name="Mol. Cell">
        <title>Recognition of a functional peroxisome type 1 target by the dynamic import receptor Pex5p.</title>
        <authorList>
            <person name="Stanley W.A."/>
            <person name="Filipp F.V."/>
            <person name="Kursula P."/>
            <person name="Schueller N."/>
            <person name="Erdmann R."/>
            <person name="Schliebs W."/>
            <person name="Sattler M."/>
            <person name="Wilmanns M."/>
        </authorList>
    </citation>
    <scope>X-RAY CRYSTALLOGRAPHY (2.3 ANGSTROMS) OF 426-547 IN COMPLEX WITH PEX5</scope>
    <scope>FUNCTION (ISOFORM SCP2)</scope>
    <scope>SUBCELLULAR LOCATION (ISOFORM SCP2)</scope>
    <scope>INTERACTION WITH PEX5 (ISOFORM SCP2)</scope>
</reference>
<reference key="22">
    <citation type="journal article" date="2006" name="Am. J. Hum. Genet.">
        <title>Mutations in the gene encoding peroxisomal sterol carrier protein X (SCPx) cause leukencephalopathy with dystonia and motor neuropathy.</title>
        <authorList>
            <person name="Ferdinandusse S."/>
            <person name="Kostopoulos P."/>
            <person name="Denis S."/>
            <person name="Rusch H."/>
            <person name="Overmars H."/>
            <person name="Dillmann U."/>
            <person name="Reith W."/>
            <person name="Haas D."/>
            <person name="Wanders R.J."/>
            <person name="Duran M."/>
            <person name="Marziniak M."/>
        </authorList>
    </citation>
    <scope>INVOLVEMENT IN LKDMN</scope>
</reference>
<reference key="23">
    <citation type="journal article" date="2006" name="Science">
        <title>The consensus coding sequences of human breast and colorectal cancers.</title>
        <authorList>
            <person name="Sjoeblom T."/>
            <person name="Jones S."/>
            <person name="Wood L.D."/>
            <person name="Parsons D.W."/>
            <person name="Lin J."/>
            <person name="Barber T.D."/>
            <person name="Mandelker D."/>
            <person name="Leary R.J."/>
            <person name="Ptak J."/>
            <person name="Silliman N."/>
            <person name="Szabo S."/>
            <person name="Buckhaults P."/>
            <person name="Farrell C."/>
            <person name="Meeh P."/>
            <person name="Markowitz S.D."/>
            <person name="Willis J."/>
            <person name="Dawson D."/>
            <person name="Willson J.K.V."/>
            <person name="Gazdar A.F."/>
            <person name="Hartigan J."/>
            <person name="Wu L."/>
            <person name="Liu C."/>
            <person name="Parmigiani G."/>
            <person name="Park B.H."/>
            <person name="Bachman K.E."/>
            <person name="Papadopoulos N."/>
            <person name="Vogelstein B."/>
            <person name="Kinzler K.W."/>
            <person name="Velculescu V.E."/>
        </authorList>
    </citation>
    <scope>VARIANT [LARGE SCALE ANALYSIS] ASP-155</scope>
</reference>
<name>SCP2_HUMAN</name>
<keyword id="KW-0002">3D-structure</keyword>
<keyword id="KW-0007">Acetylation</keyword>
<keyword id="KW-0012">Acyltransferase</keyword>
<keyword id="KW-0877">Alternative promoter usage</keyword>
<keyword id="KW-0025">Alternative splicing</keyword>
<keyword id="KW-0963">Cytoplasm</keyword>
<keyword id="KW-0903">Direct protein sequencing</keyword>
<keyword id="KW-0256">Endoplasmic reticulum</keyword>
<keyword id="KW-0443">Lipid metabolism</keyword>
<keyword id="KW-0445">Lipid transport</keyword>
<keyword id="KW-0446">Lipid-binding</keyword>
<keyword id="KW-0496">Mitochondrion</keyword>
<keyword id="KW-0576">Peroxisome</keyword>
<keyword id="KW-0597">Phosphoprotein</keyword>
<keyword id="KW-1267">Proteomics identification</keyword>
<keyword id="KW-1185">Reference proteome</keyword>
<keyword id="KW-0808">Transferase</keyword>
<keyword id="KW-0813">Transport</keyword>
<organism>
    <name type="scientific">Homo sapiens</name>
    <name type="common">Human</name>
    <dbReference type="NCBI Taxonomy" id="9606"/>
    <lineage>
        <taxon>Eukaryota</taxon>
        <taxon>Metazoa</taxon>
        <taxon>Chordata</taxon>
        <taxon>Craniata</taxon>
        <taxon>Vertebrata</taxon>
        <taxon>Euteleostomi</taxon>
        <taxon>Mammalia</taxon>
        <taxon>Eutheria</taxon>
        <taxon>Euarchontoglires</taxon>
        <taxon>Primates</taxon>
        <taxon>Haplorrhini</taxon>
        <taxon>Catarrhini</taxon>
        <taxon>Hominidae</taxon>
        <taxon>Homo</taxon>
    </lineage>
</organism>
<dbReference type="EC" id="2.3.1.155" evidence="2"/>
<dbReference type="EC" id="2.3.1.176" evidence="20"/>
<dbReference type="EC" id="2.3.1.16" evidence="2"/>
<dbReference type="EMBL" id="U11313">
    <property type="protein sequence ID" value="AAB41286.1"/>
    <property type="molecule type" value="Genomic_DNA"/>
</dbReference>
<dbReference type="EMBL" id="U11297">
    <property type="protein sequence ID" value="AAB41286.1"/>
    <property type="status" value="JOINED"/>
    <property type="molecule type" value="Genomic_DNA"/>
</dbReference>
<dbReference type="EMBL" id="U11299">
    <property type="protein sequence ID" value="AAB41286.1"/>
    <property type="status" value="JOINED"/>
    <property type="molecule type" value="Genomic_DNA"/>
</dbReference>
<dbReference type="EMBL" id="U11300">
    <property type="protein sequence ID" value="AAB41286.1"/>
    <property type="status" value="JOINED"/>
    <property type="molecule type" value="Genomic_DNA"/>
</dbReference>
<dbReference type="EMBL" id="U11301">
    <property type="protein sequence ID" value="AAB41286.1"/>
    <property type="status" value="JOINED"/>
    <property type="molecule type" value="Genomic_DNA"/>
</dbReference>
<dbReference type="EMBL" id="U11302">
    <property type="protein sequence ID" value="AAB41286.1"/>
    <property type="status" value="JOINED"/>
    <property type="molecule type" value="Genomic_DNA"/>
</dbReference>
<dbReference type="EMBL" id="U11303">
    <property type="protein sequence ID" value="AAB41286.1"/>
    <property type="status" value="JOINED"/>
    <property type="molecule type" value="Genomic_DNA"/>
</dbReference>
<dbReference type="EMBL" id="U11304">
    <property type="protein sequence ID" value="AAB41286.1"/>
    <property type="status" value="JOINED"/>
    <property type="molecule type" value="Genomic_DNA"/>
</dbReference>
<dbReference type="EMBL" id="U11305">
    <property type="protein sequence ID" value="AAB41286.1"/>
    <property type="status" value="JOINED"/>
    <property type="molecule type" value="Genomic_DNA"/>
</dbReference>
<dbReference type="EMBL" id="U11306">
    <property type="protein sequence ID" value="AAB41286.1"/>
    <property type="status" value="JOINED"/>
    <property type="molecule type" value="Genomic_DNA"/>
</dbReference>
<dbReference type="EMBL" id="U11307">
    <property type="protein sequence ID" value="AAB41286.1"/>
    <property type="status" value="JOINED"/>
    <property type="molecule type" value="Genomic_DNA"/>
</dbReference>
<dbReference type="EMBL" id="U11308">
    <property type="protein sequence ID" value="AAB41286.1"/>
    <property type="status" value="JOINED"/>
    <property type="molecule type" value="Genomic_DNA"/>
</dbReference>
<dbReference type="EMBL" id="U11309">
    <property type="protein sequence ID" value="AAB41286.1"/>
    <property type="status" value="JOINED"/>
    <property type="molecule type" value="Genomic_DNA"/>
</dbReference>
<dbReference type="EMBL" id="U11310">
    <property type="protein sequence ID" value="AAB41286.1"/>
    <property type="status" value="JOINED"/>
    <property type="molecule type" value="Genomic_DNA"/>
</dbReference>
<dbReference type="EMBL" id="U11311">
    <property type="protein sequence ID" value="AAB41286.1"/>
    <property type="status" value="JOINED"/>
    <property type="molecule type" value="Genomic_DNA"/>
</dbReference>
<dbReference type="EMBL" id="U11312">
    <property type="protein sequence ID" value="AAB41286.1"/>
    <property type="status" value="JOINED"/>
    <property type="molecule type" value="Genomic_DNA"/>
</dbReference>
<dbReference type="EMBL" id="M75883">
    <property type="protein sequence ID" value="AAA03557.1"/>
    <property type="molecule type" value="mRNA"/>
</dbReference>
<dbReference type="EMBL" id="M75884">
    <property type="protein sequence ID" value="AAA03558.1"/>
    <property type="status" value="ALT_INIT"/>
    <property type="molecule type" value="mRNA"/>
</dbReference>
<dbReference type="EMBL" id="M55421">
    <property type="protein sequence ID" value="AAA03559.1"/>
    <property type="molecule type" value="mRNA"/>
</dbReference>
<dbReference type="EMBL" id="S52450">
    <property type="protein sequence ID" value="AAB24921.1"/>
    <property type="molecule type" value="mRNA"/>
</dbReference>
<dbReference type="EMBL" id="AK294631">
    <property type="protein sequence ID" value="BAG57810.1"/>
    <property type="molecule type" value="mRNA"/>
</dbReference>
<dbReference type="EMBL" id="AK295214">
    <property type="protein sequence ID" value="BAG58208.1"/>
    <property type="molecule type" value="mRNA"/>
</dbReference>
<dbReference type="EMBL" id="AK308105">
    <property type="status" value="NOT_ANNOTATED_CDS"/>
    <property type="molecule type" value="mRNA"/>
</dbReference>
<dbReference type="EMBL" id="CR995014">
    <property type="status" value="NOT_ANNOTATED_CDS"/>
    <property type="molecule type" value="mRNA"/>
</dbReference>
<dbReference type="EMBL" id="AC099677">
    <property type="status" value="NOT_ANNOTATED_CDS"/>
    <property type="molecule type" value="Genomic_DNA"/>
</dbReference>
<dbReference type="EMBL" id="AL445183">
    <property type="status" value="NOT_ANNOTATED_CDS"/>
    <property type="molecule type" value="Genomic_DNA"/>
</dbReference>
<dbReference type="EMBL" id="CH471059">
    <property type="protein sequence ID" value="EAX06760.1"/>
    <property type="molecule type" value="Genomic_DNA"/>
</dbReference>
<dbReference type="EMBL" id="CH471059">
    <property type="protein sequence ID" value="EAX06761.1"/>
    <property type="molecule type" value="Genomic_DNA"/>
</dbReference>
<dbReference type="EMBL" id="BC005911">
    <property type="protein sequence ID" value="AAH05911.1"/>
    <property type="molecule type" value="mRNA"/>
</dbReference>
<dbReference type="EMBL" id="BC067108">
    <property type="protein sequence ID" value="AAH67108.1"/>
    <property type="molecule type" value="mRNA"/>
</dbReference>
<dbReference type="EMBL" id="CB997588">
    <property type="status" value="NOT_ANNOTATED_CDS"/>
    <property type="molecule type" value="mRNA"/>
</dbReference>
<dbReference type="CCDS" id="CCDS30719.1">
    <molecule id="P22307-5"/>
</dbReference>
<dbReference type="CCDS" id="CCDS41338.1">
    <molecule id="P22307-3"/>
</dbReference>
<dbReference type="CCDS" id="CCDS44149.1">
    <molecule id="P22307-2"/>
</dbReference>
<dbReference type="CCDS" id="CCDS44150.1">
    <molecule id="P22307-6"/>
</dbReference>
<dbReference type="CCDS" id="CCDS53317.1">
    <molecule id="P22307-7"/>
</dbReference>
<dbReference type="CCDS" id="CCDS53318.1">
    <molecule id="P22307-8"/>
</dbReference>
<dbReference type="CCDS" id="CCDS53319.1">
    <molecule id="P22307-4"/>
</dbReference>
<dbReference type="CCDS" id="CCDS572.1">
    <molecule id="P22307-1"/>
</dbReference>
<dbReference type="PIR" id="B40407">
    <property type="entry name" value="B40407"/>
</dbReference>
<dbReference type="PIR" id="I38205">
    <property type="entry name" value="I38205"/>
</dbReference>
<dbReference type="RefSeq" id="NP_001007099.1">
    <molecule id="P22307-3"/>
    <property type="nucleotide sequence ID" value="NM_001007098.3"/>
</dbReference>
<dbReference type="RefSeq" id="NP_001007100.1">
    <molecule id="P22307-2"/>
    <property type="nucleotide sequence ID" value="NM_001007099.3"/>
</dbReference>
<dbReference type="RefSeq" id="NP_001007101.1">
    <molecule id="P22307-6"/>
    <property type="nucleotide sequence ID" value="NM_001007100.3"/>
</dbReference>
<dbReference type="RefSeq" id="NP_001007251.1">
    <molecule id="P22307-5"/>
    <property type="nucleotide sequence ID" value="NM_001007250.3"/>
</dbReference>
<dbReference type="RefSeq" id="NP_001180528.1">
    <molecule id="P22307-8"/>
    <property type="nucleotide sequence ID" value="NM_001193599.2"/>
</dbReference>
<dbReference type="RefSeq" id="NP_001180529.1">
    <molecule id="P22307-7"/>
    <property type="nucleotide sequence ID" value="NM_001193600.2"/>
</dbReference>
<dbReference type="RefSeq" id="NP_001180546.1">
    <molecule id="P22307-4"/>
    <property type="nucleotide sequence ID" value="NM_001193617.2"/>
</dbReference>
<dbReference type="RefSeq" id="NP_002970.2">
    <molecule id="P22307-1"/>
    <property type="nucleotide sequence ID" value="NM_002979.4"/>
</dbReference>
<dbReference type="RefSeq" id="XP_016857535.1">
    <property type="nucleotide sequence ID" value="XM_017002046.1"/>
</dbReference>
<dbReference type="PDB" id="1QND">
    <property type="method" value="NMR"/>
    <property type="chains" value="A=425-547"/>
</dbReference>
<dbReference type="PDB" id="2C0L">
    <property type="method" value="X-ray"/>
    <property type="resolution" value="2.30 A"/>
    <property type="chains" value="B=426-547"/>
</dbReference>
<dbReference type="PDBsum" id="1QND"/>
<dbReference type="PDBsum" id="2C0L"/>
<dbReference type="BMRB" id="P22307"/>
<dbReference type="SMR" id="P22307"/>
<dbReference type="BioGRID" id="112246">
    <property type="interactions" value="68"/>
</dbReference>
<dbReference type="ELM" id="P22307"/>
<dbReference type="FunCoup" id="P22307">
    <property type="interactions" value="1653"/>
</dbReference>
<dbReference type="IntAct" id="P22307">
    <property type="interactions" value="33"/>
</dbReference>
<dbReference type="MINT" id="P22307"/>
<dbReference type="STRING" id="9606.ENSP00000360569"/>
<dbReference type="BindingDB" id="P22307"/>
<dbReference type="ChEMBL" id="CHEMBL5950"/>
<dbReference type="GlyGen" id="P22307">
    <property type="glycosylation" value="1 site, 1 O-linked glycan (1 site)"/>
</dbReference>
<dbReference type="iPTMnet" id="P22307"/>
<dbReference type="MetOSite" id="P22307"/>
<dbReference type="PhosphoSitePlus" id="P22307"/>
<dbReference type="SwissPalm" id="P22307"/>
<dbReference type="BioMuta" id="SCP2"/>
<dbReference type="DMDM" id="2507456"/>
<dbReference type="REPRODUCTION-2DPAGE" id="IPI00026105"/>
<dbReference type="jPOST" id="P22307"/>
<dbReference type="MassIVE" id="P22307"/>
<dbReference type="PaxDb" id="9606-ENSP00000360569"/>
<dbReference type="PeptideAtlas" id="P22307"/>
<dbReference type="ProteomicsDB" id="1519"/>
<dbReference type="ProteomicsDB" id="15203"/>
<dbReference type="ProteomicsDB" id="23994"/>
<dbReference type="ProteomicsDB" id="4236"/>
<dbReference type="ProteomicsDB" id="53978">
    <molecule id="P22307-1"/>
</dbReference>
<dbReference type="ProteomicsDB" id="53979">
    <molecule id="P22307-2"/>
</dbReference>
<dbReference type="ProteomicsDB" id="53980">
    <molecule id="P22307-3"/>
</dbReference>
<dbReference type="ProteomicsDB" id="9559"/>
<dbReference type="Pumba" id="P22307"/>
<dbReference type="TopDownProteomics" id="P22307-1">
    <molecule id="P22307-1"/>
</dbReference>
<dbReference type="TopDownProteomics" id="P22307-2">
    <molecule id="P22307-2"/>
</dbReference>
<dbReference type="TopDownProteomics" id="P22307-4">
    <molecule id="P22307-4"/>
</dbReference>
<dbReference type="Antibodypedia" id="19167">
    <property type="antibodies" value="484 antibodies from 33 providers"/>
</dbReference>
<dbReference type="DNASU" id="6342"/>
<dbReference type="Ensembl" id="ENST00000371509.8">
    <molecule id="P22307-7"/>
    <property type="protein sequence ID" value="ENSP00000360564.4"/>
    <property type="gene ID" value="ENSG00000116171.19"/>
</dbReference>
<dbReference type="Ensembl" id="ENST00000371513.9">
    <molecule id="P22307-3"/>
    <property type="protein sequence ID" value="ENSP00000360568.5"/>
    <property type="gene ID" value="ENSG00000116171.19"/>
</dbReference>
<dbReference type="Ensembl" id="ENST00000371514.8">
    <molecule id="P22307-1"/>
    <property type="protein sequence ID" value="ENSP00000360569.3"/>
    <property type="gene ID" value="ENSG00000116171.19"/>
</dbReference>
<dbReference type="Ensembl" id="ENST00000407246.6">
    <molecule id="P22307-8"/>
    <property type="protein sequence ID" value="ENSP00000384569.2"/>
    <property type="gene ID" value="ENSG00000116171.19"/>
</dbReference>
<dbReference type="Ensembl" id="ENST00000408941.7">
    <molecule id="P22307-5"/>
    <property type="protein sequence ID" value="ENSP00000386214.3"/>
    <property type="gene ID" value="ENSG00000116171.19"/>
</dbReference>
<dbReference type="Ensembl" id="ENST00000430330.6">
    <molecule id="P22307-6"/>
    <property type="protein sequence ID" value="ENSP00000406636.2"/>
    <property type="gene ID" value="ENSG00000116171.19"/>
</dbReference>
<dbReference type="Ensembl" id="ENST00000435345.6">
    <molecule id="P22307-2"/>
    <property type="protein sequence ID" value="ENSP00000396413.2"/>
    <property type="gene ID" value="ENSG00000116171.19"/>
</dbReference>
<dbReference type="Ensembl" id="ENST00000488965.1">
    <molecule id="P22307-5"/>
    <property type="protein sequence ID" value="ENSP00000435783.1"/>
    <property type="gene ID" value="ENSG00000116171.19"/>
</dbReference>
<dbReference type="Ensembl" id="ENST00000528311.5">
    <molecule id="P22307-4"/>
    <property type="protein sequence ID" value="ENSP00000434132.1"/>
    <property type="gene ID" value="ENSG00000116171.19"/>
</dbReference>
<dbReference type="GeneID" id="6342"/>
<dbReference type="KEGG" id="hsa:6342"/>
<dbReference type="MANE-Select" id="ENST00000371514.8">
    <property type="protein sequence ID" value="ENSP00000360569.3"/>
    <property type="RefSeq nucleotide sequence ID" value="NM_002979.5"/>
    <property type="RefSeq protein sequence ID" value="NP_002970.2"/>
</dbReference>
<dbReference type="UCSC" id="uc001cuq.3">
    <molecule id="P22307-1"/>
    <property type="organism name" value="human"/>
</dbReference>
<dbReference type="AGR" id="HGNC:10606"/>
<dbReference type="CTD" id="6342"/>
<dbReference type="DisGeNET" id="6342"/>
<dbReference type="GeneCards" id="SCP2"/>
<dbReference type="HGNC" id="HGNC:10606">
    <property type="gene designation" value="SCP2"/>
</dbReference>
<dbReference type="HPA" id="ENSG00000116171">
    <property type="expression patterns" value="Tissue enhanced (liver)"/>
</dbReference>
<dbReference type="MalaCards" id="SCP2"/>
<dbReference type="MIM" id="184755">
    <property type="type" value="gene"/>
</dbReference>
<dbReference type="MIM" id="613724">
    <property type="type" value="phenotype"/>
</dbReference>
<dbReference type="neXtProt" id="NX_P22307"/>
<dbReference type="OpenTargets" id="ENSG00000116171"/>
<dbReference type="Orphanet" id="163684">
    <property type="disease" value="Leukoencephalopathy-dystonia-motor neuropathy syndrome"/>
</dbReference>
<dbReference type="PharmGKB" id="PA35014"/>
<dbReference type="VEuPathDB" id="HostDB:ENSG00000116171"/>
<dbReference type="eggNOG" id="KOG1406">
    <property type="taxonomic scope" value="Eukaryota"/>
</dbReference>
<dbReference type="eggNOG" id="KOG4170">
    <property type="taxonomic scope" value="Eukaryota"/>
</dbReference>
<dbReference type="GeneTree" id="ENSGT00940000154327"/>
<dbReference type="HOGENOM" id="CLU_035425_0_1_1"/>
<dbReference type="InParanoid" id="P22307"/>
<dbReference type="OMA" id="PSLYAMM"/>
<dbReference type="OrthoDB" id="542135at2759"/>
<dbReference type="PAN-GO" id="P22307">
    <property type="GO annotations" value="4 GO annotations based on evolutionary models"/>
</dbReference>
<dbReference type="PhylomeDB" id="P22307"/>
<dbReference type="TreeFam" id="TF300574"/>
<dbReference type="BioCyc" id="MetaCyc:HS03991-MONOMER"/>
<dbReference type="BRENDA" id="2.3.1.176">
    <property type="organism ID" value="2681"/>
</dbReference>
<dbReference type="PathwayCommons" id="P22307"/>
<dbReference type="Reactome" id="R-HSA-193368">
    <molecule id="P22307-1"/>
    <property type="pathway name" value="Synthesis of bile acids and bile salts via 7alpha-hydroxycholesterol"/>
</dbReference>
<dbReference type="Reactome" id="R-HSA-2046106">
    <property type="pathway name" value="alpha-linolenic acid (ALA) metabolism"/>
</dbReference>
<dbReference type="Reactome" id="R-HSA-389887">
    <molecule id="P22307-1"/>
    <property type="pathway name" value="Beta-oxidation of pristanoyl-CoA"/>
</dbReference>
<dbReference type="Reactome" id="R-HSA-9033241">
    <property type="pathway name" value="Peroxisomal protein import"/>
</dbReference>
<dbReference type="Reactome" id="R-HSA-9033500">
    <property type="pathway name" value="TYSND1 cleaves peroxisomal proteins"/>
</dbReference>
<dbReference type="SignaLink" id="P22307"/>
<dbReference type="SIGNOR" id="P22307"/>
<dbReference type="BioGRID-ORCS" id="6342">
    <property type="hits" value="12 hits in 1157 CRISPR screens"/>
</dbReference>
<dbReference type="ChiTaRS" id="SCP2">
    <property type="organism name" value="human"/>
</dbReference>
<dbReference type="EvolutionaryTrace" id="P22307"/>
<dbReference type="GeneWiki" id="SCP2"/>
<dbReference type="GenomeRNAi" id="6342"/>
<dbReference type="Pharos" id="P22307">
    <property type="development level" value="Tchem"/>
</dbReference>
<dbReference type="PRO" id="PR:P22307"/>
<dbReference type="Proteomes" id="UP000005640">
    <property type="component" value="Chromosome 1"/>
</dbReference>
<dbReference type="RNAct" id="P22307">
    <property type="molecule type" value="protein"/>
</dbReference>
<dbReference type="Bgee" id="ENSG00000116171">
    <property type="expression patterns" value="Expressed in jejunal mucosa and 212 other cell types or tissues"/>
</dbReference>
<dbReference type="ExpressionAtlas" id="P22307">
    <property type="expression patterns" value="baseline and differential"/>
</dbReference>
<dbReference type="GO" id="GO:0005737">
    <property type="term" value="C:cytoplasm"/>
    <property type="evidence" value="ECO:0000250"/>
    <property type="project" value="UniProtKB"/>
</dbReference>
<dbReference type="GO" id="GO:0005829">
    <property type="term" value="C:cytosol"/>
    <property type="evidence" value="ECO:0000304"/>
    <property type="project" value="Reactome"/>
</dbReference>
<dbReference type="GO" id="GO:0005783">
    <property type="term" value="C:endoplasmic reticulum"/>
    <property type="evidence" value="ECO:0000250"/>
    <property type="project" value="UniProtKB"/>
</dbReference>
<dbReference type="GO" id="GO:0016020">
    <property type="term" value="C:membrane"/>
    <property type="evidence" value="ECO:0007005"/>
    <property type="project" value="UniProtKB"/>
</dbReference>
<dbReference type="GO" id="GO:0005739">
    <property type="term" value="C:mitochondrion"/>
    <property type="evidence" value="ECO:0000250"/>
    <property type="project" value="UniProtKB"/>
</dbReference>
<dbReference type="GO" id="GO:0005654">
    <property type="term" value="C:nucleoplasm"/>
    <property type="evidence" value="ECO:0000314"/>
    <property type="project" value="HPA"/>
</dbReference>
<dbReference type="GO" id="GO:0005782">
    <property type="term" value="C:peroxisomal matrix"/>
    <property type="evidence" value="ECO:0000250"/>
    <property type="project" value="UniProtKB"/>
</dbReference>
<dbReference type="GO" id="GO:0005777">
    <property type="term" value="C:peroxisome"/>
    <property type="evidence" value="ECO:0000314"/>
    <property type="project" value="HPA"/>
</dbReference>
<dbReference type="GO" id="GO:0032991">
    <property type="term" value="C:protein-containing complex"/>
    <property type="evidence" value="ECO:0000314"/>
    <property type="project" value="UniProtKB"/>
</dbReference>
<dbReference type="GO" id="GO:0003988">
    <property type="term" value="F:acetyl-CoA C-acyltransferase activity"/>
    <property type="evidence" value="ECO:0000250"/>
    <property type="project" value="UniProtKB"/>
</dbReference>
<dbReference type="GO" id="GO:0050633">
    <property type="term" value="F:acetyl-CoA C-myristoyltransferase activity"/>
    <property type="evidence" value="ECO:0000250"/>
    <property type="project" value="UniProtKB"/>
</dbReference>
<dbReference type="GO" id="GO:0015485">
    <property type="term" value="F:cholesterol binding"/>
    <property type="evidence" value="ECO:0000314"/>
    <property type="project" value="UniProtKB"/>
</dbReference>
<dbReference type="GO" id="GO:0120020">
    <property type="term" value="F:cholesterol transfer activity"/>
    <property type="evidence" value="ECO:0000315"/>
    <property type="project" value="UniProtKB"/>
</dbReference>
<dbReference type="GO" id="GO:0000062">
    <property type="term" value="F:fatty-acyl-CoA binding"/>
    <property type="evidence" value="ECO:0000314"/>
    <property type="project" value="UniProtKB"/>
</dbReference>
<dbReference type="GO" id="GO:0036042">
    <property type="term" value="F:long-chain fatty acyl-CoA binding"/>
    <property type="evidence" value="ECO:0000314"/>
    <property type="project" value="UniProtKB"/>
</dbReference>
<dbReference type="GO" id="GO:0070538">
    <property type="term" value="F:oleic acid binding"/>
    <property type="evidence" value="ECO:0000314"/>
    <property type="project" value="UniProtKB"/>
</dbReference>
<dbReference type="GO" id="GO:0120019">
    <property type="term" value="F:phosphatidylcholine transfer activity"/>
    <property type="evidence" value="ECO:0000250"/>
    <property type="project" value="UniProtKB"/>
</dbReference>
<dbReference type="GO" id="GO:0008526">
    <property type="term" value="F:phosphatidylinositol transfer activity"/>
    <property type="evidence" value="ECO:0000314"/>
    <property type="project" value="UniProtKB"/>
</dbReference>
<dbReference type="GO" id="GO:0033814">
    <property type="term" value="F:propanoyl-CoA C-acyltransferase activity"/>
    <property type="evidence" value="ECO:0007669"/>
    <property type="project" value="RHEA"/>
</dbReference>
<dbReference type="GO" id="GO:0050632">
    <property type="term" value="F:propionyl-CoA C2-trimethyltridecanoyltransferase activity"/>
    <property type="evidence" value="ECO:0000269"/>
    <property type="project" value="Reactome"/>
</dbReference>
<dbReference type="GO" id="GO:0005102">
    <property type="term" value="F:signaling receptor binding"/>
    <property type="evidence" value="ECO:0000353"/>
    <property type="project" value="UniProtKB"/>
</dbReference>
<dbReference type="GO" id="GO:0036109">
    <property type="term" value="P:alpha-linolenic acid metabolic process"/>
    <property type="evidence" value="ECO:0000304"/>
    <property type="project" value="Reactome"/>
</dbReference>
<dbReference type="GO" id="GO:0006699">
    <property type="term" value="P:bile acid biosynthetic process"/>
    <property type="evidence" value="ECO:0000304"/>
    <property type="project" value="Reactome"/>
</dbReference>
<dbReference type="GO" id="GO:0008206">
    <property type="term" value="P:bile acid metabolic process"/>
    <property type="evidence" value="ECO:0000250"/>
    <property type="project" value="UniProtKB"/>
</dbReference>
<dbReference type="GO" id="GO:0006635">
    <property type="term" value="P:fatty acid beta-oxidation"/>
    <property type="evidence" value="ECO:0000250"/>
    <property type="project" value="UniProtKB"/>
</dbReference>
<dbReference type="GO" id="GO:0033540">
    <property type="term" value="P:fatty acid beta-oxidation using acyl-CoA oxidase"/>
    <property type="evidence" value="ECO:0000304"/>
    <property type="project" value="Reactome"/>
</dbReference>
<dbReference type="GO" id="GO:1901570">
    <property type="term" value="P:fatty acid derivative biosynthetic process"/>
    <property type="evidence" value="ECO:0007669"/>
    <property type="project" value="Ensembl"/>
</dbReference>
<dbReference type="GO" id="GO:0032959">
    <property type="term" value="P:inositol trisphosphate biosynthetic process"/>
    <property type="evidence" value="ECO:0000314"/>
    <property type="project" value="UniProtKB"/>
</dbReference>
<dbReference type="GO" id="GO:0032367">
    <property type="term" value="P:intracellular cholesterol transport"/>
    <property type="evidence" value="ECO:0000315"/>
    <property type="project" value="UniProtKB"/>
</dbReference>
<dbReference type="GO" id="GO:1901373">
    <property type="term" value="P:lipid hydroperoxide transport"/>
    <property type="evidence" value="ECO:0000314"/>
    <property type="project" value="UniProtKB"/>
</dbReference>
<dbReference type="GO" id="GO:0042759">
    <property type="term" value="P:long-chain fatty acid biosynthetic process"/>
    <property type="evidence" value="ECO:0007669"/>
    <property type="project" value="Ensembl"/>
</dbReference>
<dbReference type="GO" id="GO:0015914">
    <property type="term" value="P:phospholipid transport"/>
    <property type="evidence" value="ECO:0000314"/>
    <property type="project" value="UniProtKB"/>
</dbReference>
<dbReference type="GO" id="GO:0032385">
    <property type="term" value="P:positive regulation of intracellular cholesterol transport"/>
    <property type="evidence" value="ECO:0000314"/>
    <property type="project" value="UniProtKB"/>
</dbReference>
<dbReference type="GO" id="GO:0045940">
    <property type="term" value="P:positive regulation of steroid metabolic process"/>
    <property type="evidence" value="ECO:0000314"/>
    <property type="project" value="UniProtKB"/>
</dbReference>
<dbReference type="GO" id="GO:0006701">
    <property type="term" value="P:progesterone biosynthetic process"/>
    <property type="evidence" value="ECO:0000314"/>
    <property type="project" value="UniProtKB"/>
</dbReference>
<dbReference type="GO" id="GO:0072659">
    <property type="term" value="P:protein localization to plasma membrane"/>
    <property type="evidence" value="ECO:0000314"/>
    <property type="project" value="UniProtKB"/>
</dbReference>
<dbReference type="GO" id="GO:0071071">
    <property type="term" value="P:regulation of phospholipid biosynthetic process"/>
    <property type="evidence" value="ECO:0000250"/>
    <property type="project" value="UniProtKB"/>
</dbReference>
<dbReference type="GO" id="GO:0006694">
    <property type="term" value="P:steroid biosynthetic process"/>
    <property type="evidence" value="ECO:0000314"/>
    <property type="project" value="UniProtKB"/>
</dbReference>
<dbReference type="GO" id="GO:0006636">
    <property type="term" value="P:unsaturated fatty acid biosynthetic process"/>
    <property type="evidence" value="ECO:0007669"/>
    <property type="project" value="Ensembl"/>
</dbReference>
<dbReference type="CDD" id="cd00826">
    <property type="entry name" value="nondecarbox_cond_enzymes"/>
    <property type="match status" value="1"/>
</dbReference>
<dbReference type="FunFam" id="3.40.47.10:FF:000016">
    <property type="entry name" value="Non-specific lipid-transfer protein"/>
    <property type="match status" value="1"/>
</dbReference>
<dbReference type="FunFam" id="3.30.1050.10:FF:000001">
    <property type="entry name" value="Putative Non-specific lipid-transfer protein"/>
    <property type="match status" value="1"/>
</dbReference>
<dbReference type="Gene3D" id="3.40.47.10">
    <property type="match status" value="1"/>
</dbReference>
<dbReference type="Gene3D" id="3.30.1050.10">
    <property type="entry name" value="SCP2 sterol-binding domain"/>
    <property type="match status" value="1"/>
</dbReference>
<dbReference type="InterPro" id="IPR003033">
    <property type="entry name" value="SCP2_sterol-bd_dom"/>
</dbReference>
<dbReference type="InterPro" id="IPR036527">
    <property type="entry name" value="SCP2_sterol-bd_dom_sf"/>
</dbReference>
<dbReference type="InterPro" id="IPR016039">
    <property type="entry name" value="Thiolase-like"/>
</dbReference>
<dbReference type="InterPro" id="IPR020615">
    <property type="entry name" value="Thiolase_acyl_enz_int_AS"/>
</dbReference>
<dbReference type="InterPro" id="IPR055140">
    <property type="entry name" value="Thiolase_C_2"/>
</dbReference>
<dbReference type="InterPro" id="IPR020613">
    <property type="entry name" value="Thiolase_CS"/>
</dbReference>
<dbReference type="InterPro" id="IPR020616">
    <property type="entry name" value="Thiolase_N"/>
</dbReference>
<dbReference type="NCBIfam" id="NF006102">
    <property type="entry name" value="PRK08256.1"/>
    <property type="match status" value="1"/>
</dbReference>
<dbReference type="PANTHER" id="PTHR42870">
    <property type="entry name" value="ACETYL-COA C-ACETYLTRANSFERASE"/>
    <property type="match status" value="1"/>
</dbReference>
<dbReference type="PANTHER" id="PTHR42870:SF1">
    <property type="entry name" value="NON-SPECIFIC LIPID-TRANSFER PROTEIN-LIKE 2"/>
    <property type="match status" value="1"/>
</dbReference>
<dbReference type="Pfam" id="PF02036">
    <property type="entry name" value="SCP2"/>
    <property type="match status" value="1"/>
</dbReference>
<dbReference type="Pfam" id="PF22691">
    <property type="entry name" value="Thiolase_C_1"/>
    <property type="match status" value="1"/>
</dbReference>
<dbReference type="Pfam" id="PF00108">
    <property type="entry name" value="Thiolase_N"/>
    <property type="match status" value="1"/>
</dbReference>
<dbReference type="SUPFAM" id="SSF55718">
    <property type="entry name" value="SCP-like"/>
    <property type="match status" value="1"/>
</dbReference>
<dbReference type="SUPFAM" id="SSF53901">
    <property type="entry name" value="Thiolase-like"/>
    <property type="match status" value="2"/>
</dbReference>
<dbReference type="PROSITE" id="PS00098">
    <property type="entry name" value="THIOLASE_1"/>
    <property type="match status" value="1"/>
</dbReference>
<dbReference type="PROSITE" id="PS00737">
    <property type="entry name" value="THIOLASE_2"/>
    <property type="match status" value="1"/>
</dbReference>
<sequence>MSSSPWEPATLRRVFVVGVGMTKFVKPGAENSRDYPDLAEEAGKKALADAQIPYSAVDQACVGYVFGDSTCGQRAIYHSLGMTGIPIINVNNNCATGSTALFMARQLIQGGVAECVLALGFEKMSKGSLGIKFSDRTIPTDKHVDLLINKYGLSAHPVAPQMFGYAGKEHMEKYGTKIEHFAKIGWKNHKHSVNNPYSQFQDEYSLDEVMASKEVFDFLTILQCCPTSDGAAAAILASEAFVQKYGLQSKAVEILAQEMMTDLPSSFEEKSIIKMVGFDMSKEAARKCYEKSGLTPNDIDVIELHDCFSTNELLTYEALGLCPEGQGATLVDRGDNTYGGKWVINPSGGLISKGHPLGATGLAQCAELCWQLRGEAGKRQVPGAKVALQHNLGIGGAVVVTLYKMGFPEAASSFRTHQIEAVPTSSASDGFKANLVFKEIEKKLEEEGEQFVKKIGGIFAFKVKDGPGGKEATWVVDVKNGKGSVLPNSDKKADCTITMADSDFLALMTGKMNPQSAFFQGKLKITGNMGLAMKLQNLQLQPGNAKL</sequence>